<protein>
    <recommendedName>
        <fullName evidence="1">Protein nucleotidyltransferase YdiU</fullName>
        <ecNumber evidence="1">2.7.7.-</ecNumber>
    </recommendedName>
    <alternativeName>
        <fullName evidence="1">Protein adenylyltransferase YdiU</fullName>
        <ecNumber evidence="1">2.7.7.108</ecNumber>
    </alternativeName>
    <alternativeName>
        <fullName evidence="1">Protein uridylyltransferase YdiU</fullName>
        <ecNumber evidence="1">2.7.7.-</ecNumber>
    </alternativeName>
</protein>
<evidence type="ECO:0000255" key="1">
    <source>
        <dbReference type="HAMAP-Rule" id="MF_00692"/>
    </source>
</evidence>
<proteinExistence type="inferred from homology"/>
<reference key="1">
    <citation type="submission" date="2006-05" db="EMBL/GenBank/DDBJ databases">
        <title>Complete sequence of chromosome of Silicibacter sp. TM1040.</title>
        <authorList>
            <consortium name="US DOE Joint Genome Institute"/>
            <person name="Copeland A."/>
            <person name="Lucas S."/>
            <person name="Lapidus A."/>
            <person name="Barry K."/>
            <person name="Detter J.C."/>
            <person name="Glavina del Rio T."/>
            <person name="Hammon N."/>
            <person name="Israni S."/>
            <person name="Dalin E."/>
            <person name="Tice H."/>
            <person name="Pitluck S."/>
            <person name="Brettin T."/>
            <person name="Bruce D."/>
            <person name="Han C."/>
            <person name="Tapia R."/>
            <person name="Goodwin L."/>
            <person name="Thompson L.S."/>
            <person name="Gilna P."/>
            <person name="Schmutz J."/>
            <person name="Larimer F."/>
            <person name="Land M."/>
            <person name="Hauser L."/>
            <person name="Kyrpides N."/>
            <person name="Kim E."/>
            <person name="Belas R."/>
            <person name="Moran M.A."/>
            <person name="Buchan A."/>
            <person name="Gonzalez J.M."/>
            <person name="Schell M.A."/>
            <person name="Sun F."/>
            <person name="Richardson P."/>
        </authorList>
    </citation>
    <scope>NUCLEOTIDE SEQUENCE [LARGE SCALE GENOMIC DNA]</scope>
    <source>
        <strain>TM1040</strain>
    </source>
</reference>
<feature type="chain" id="PRO_0000271872" description="Protein nucleotidyltransferase YdiU">
    <location>
        <begin position="1"/>
        <end position="472"/>
    </location>
</feature>
<feature type="active site" description="Proton acceptor" evidence="1">
    <location>
        <position position="244"/>
    </location>
</feature>
<feature type="binding site" evidence="1">
    <location>
        <position position="86"/>
    </location>
    <ligand>
        <name>ATP</name>
        <dbReference type="ChEBI" id="CHEBI:30616"/>
    </ligand>
</feature>
<feature type="binding site" evidence="1">
    <location>
        <position position="88"/>
    </location>
    <ligand>
        <name>ATP</name>
        <dbReference type="ChEBI" id="CHEBI:30616"/>
    </ligand>
</feature>
<feature type="binding site" evidence="1">
    <location>
        <position position="89"/>
    </location>
    <ligand>
        <name>ATP</name>
        <dbReference type="ChEBI" id="CHEBI:30616"/>
    </ligand>
</feature>
<feature type="binding site" evidence="1">
    <location>
        <position position="109"/>
    </location>
    <ligand>
        <name>ATP</name>
        <dbReference type="ChEBI" id="CHEBI:30616"/>
    </ligand>
</feature>
<feature type="binding site" evidence="1">
    <location>
        <position position="121"/>
    </location>
    <ligand>
        <name>ATP</name>
        <dbReference type="ChEBI" id="CHEBI:30616"/>
    </ligand>
</feature>
<feature type="binding site" evidence="1">
    <location>
        <position position="122"/>
    </location>
    <ligand>
        <name>ATP</name>
        <dbReference type="ChEBI" id="CHEBI:30616"/>
    </ligand>
</feature>
<feature type="binding site" evidence="1">
    <location>
        <position position="172"/>
    </location>
    <ligand>
        <name>ATP</name>
        <dbReference type="ChEBI" id="CHEBI:30616"/>
    </ligand>
</feature>
<feature type="binding site" evidence="1">
    <location>
        <position position="179"/>
    </location>
    <ligand>
        <name>ATP</name>
        <dbReference type="ChEBI" id="CHEBI:30616"/>
    </ligand>
</feature>
<feature type="binding site" evidence="1">
    <location>
        <position position="245"/>
    </location>
    <ligand>
        <name>Mg(2+)</name>
        <dbReference type="ChEBI" id="CHEBI:18420"/>
    </ligand>
</feature>
<feature type="binding site" evidence="1">
    <location>
        <position position="254"/>
    </location>
    <ligand>
        <name>ATP</name>
        <dbReference type="ChEBI" id="CHEBI:30616"/>
    </ligand>
</feature>
<feature type="binding site" evidence="1">
    <location>
        <position position="254"/>
    </location>
    <ligand>
        <name>Mg(2+)</name>
        <dbReference type="ChEBI" id="CHEBI:18420"/>
    </ligand>
</feature>
<comment type="function">
    <text evidence="1">Nucleotidyltransferase involved in the post-translational modification of proteins. It can catalyze the addition of adenosine monophosphate (AMP) or uridine monophosphate (UMP) to a protein, resulting in modifications known as AMPylation and UMPylation.</text>
</comment>
<comment type="catalytic activity">
    <reaction evidence="1">
        <text>L-seryl-[protein] + ATP = 3-O-(5'-adenylyl)-L-seryl-[protein] + diphosphate</text>
        <dbReference type="Rhea" id="RHEA:58120"/>
        <dbReference type="Rhea" id="RHEA-COMP:9863"/>
        <dbReference type="Rhea" id="RHEA-COMP:15073"/>
        <dbReference type="ChEBI" id="CHEBI:29999"/>
        <dbReference type="ChEBI" id="CHEBI:30616"/>
        <dbReference type="ChEBI" id="CHEBI:33019"/>
        <dbReference type="ChEBI" id="CHEBI:142516"/>
        <dbReference type="EC" id="2.7.7.108"/>
    </reaction>
</comment>
<comment type="catalytic activity">
    <reaction evidence="1">
        <text>L-threonyl-[protein] + ATP = 3-O-(5'-adenylyl)-L-threonyl-[protein] + diphosphate</text>
        <dbReference type="Rhea" id="RHEA:54292"/>
        <dbReference type="Rhea" id="RHEA-COMP:11060"/>
        <dbReference type="Rhea" id="RHEA-COMP:13847"/>
        <dbReference type="ChEBI" id="CHEBI:30013"/>
        <dbReference type="ChEBI" id="CHEBI:30616"/>
        <dbReference type="ChEBI" id="CHEBI:33019"/>
        <dbReference type="ChEBI" id="CHEBI:138113"/>
        <dbReference type="EC" id="2.7.7.108"/>
    </reaction>
</comment>
<comment type="catalytic activity">
    <reaction evidence="1">
        <text>L-tyrosyl-[protein] + ATP = O-(5'-adenylyl)-L-tyrosyl-[protein] + diphosphate</text>
        <dbReference type="Rhea" id="RHEA:54288"/>
        <dbReference type="Rhea" id="RHEA-COMP:10136"/>
        <dbReference type="Rhea" id="RHEA-COMP:13846"/>
        <dbReference type="ChEBI" id="CHEBI:30616"/>
        <dbReference type="ChEBI" id="CHEBI:33019"/>
        <dbReference type="ChEBI" id="CHEBI:46858"/>
        <dbReference type="ChEBI" id="CHEBI:83624"/>
        <dbReference type="EC" id="2.7.7.108"/>
    </reaction>
</comment>
<comment type="catalytic activity">
    <reaction evidence="1">
        <text>L-histidyl-[protein] + UTP = N(tele)-(5'-uridylyl)-L-histidyl-[protein] + diphosphate</text>
        <dbReference type="Rhea" id="RHEA:83891"/>
        <dbReference type="Rhea" id="RHEA-COMP:9745"/>
        <dbReference type="Rhea" id="RHEA-COMP:20239"/>
        <dbReference type="ChEBI" id="CHEBI:29979"/>
        <dbReference type="ChEBI" id="CHEBI:33019"/>
        <dbReference type="ChEBI" id="CHEBI:46398"/>
        <dbReference type="ChEBI" id="CHEBI:233474"/>
    </reaction>
</comment>
<comment type="catalytic activity">
    <reaction evidence="1">
        <text>L-seryl-[protein] + UTP = O-(5'-uridylyl)-L-seryl-[protein] + diphosphate</text>
        <dbReference type="Rhea" id="RHEA:64604"/>
        <dbReference type="Rhea" id="RHEA-COMP:9863"/>
        <dbReference type="Rhea" id="RHEA-COMP:16635"/>
        <dbReference type="ChEBI" id="CHEBI:29999"/>
        <dbReference type="ChEBI" id="CHEBI:33019"/>
        <dbReference type="ChEBI" id="CHEBI:46398"/>
        <dbReference type="ChEBI" id="CHEBI:156051"/>
    </reaction>
</comment>
<comment type="catalytic activity">
    <reaction evidence="1">
        <text>L-tyrosyl-[protein] + UTP = O-(5'-uridylyl)-L-tyrosyl-[protein] + diphosphate</text>
        <dbReference type="Rhea" id="RHEA:83887"/>
        <dbReference type="Rhea" id="RHEA-COMP:10136"/>
        <dbReference type="Rhea" id="RHEA-COMP:20238"/>
        <dbReference type="ChEBI" id="CHEBI:33019"/>
        <dbReference type="ChEBI" id="CHEBI:46398"/>
        <dbReference type="ChEBI" id="CHEBI:46858"/>
        <dbReference type="ChEBI" id="CHEBI:90602"/>
    </reaction>
</comment>
<comment type="cofactor">
    <cofactor evidence="1">
        <name>Mg(2+)</name>
        <dbReference type="ChEBI" id="CHEBI:18420"/>
    </cofactor>
    <cofactor evidence="1">
        <name>Mn(2+)</name>
        <dbReference type="ChEBI" id="CHEBI:29035"/>
    </cofactor>
</comment>
<comment type="similarity">
    <text evidence="1">Belongs to the SELO family.</text>
</comment>
<gene>
    <name evidence="1" type="primary">ydiU</name>
    <name evidence="1" type="synonym">selO</name>
    <name type="ordered locus">TM1040_0926</name>
</gene>
<keyword id="KW-0067">ATP-binding</keyword>
<keyword id="KW-0460">Magnesium</keyword>
<keyword id="KW-0464">Manganese</keyword>
<keyword id="KW-0479">Metal-binding</keyword>
<keyword id="KW-0547">Nucleotide-binding</keyword>
<keyword id="KW-0548">Nucleotidyltransferase</keyword>
<keyword id="KW-1185">Reference proteome</keyword>
<keyword id="KW-0808">Transferase</keyword>
<organism>
    <name type="scientific">Ruegeria sp. (strain TM1040)</name>
    <name type="common">Silicibacter sp.</name>
    <dbReference type="NCBI Taxonomy" id="292414"/>
    <lineage>
        <taxon>Bacteria</taxon>
        <taxon>Pseudomonadati</taxon>
        <taxon>Pseudomonadota</taxon>
        <taxon>Alphaproteobacteria</taxon>
        <taxon>Rhodobacterales</taxon>
        <taxon>Roseobacteraceae</taxon>
        <taxon>Ruegeria</taxon>
    </lineage>
</organism>
<dbReference type="EC" id="2.7.7.-" evidence="1"/>
<dbReference type="EC" id="2.7.7.108" evidence="1"/>
<dbReference type="EMBL" id="CP000377">
    <property type="protein sequence ID" value="ABF63659.1"/>
    <property type="molecule type" value="Genomic_DNA"/>
</dbReference>
<dbReference type="RefSeq" id="WP_011538269.1">
    <property type="nucleotide sequence ID" value="NC_008044.1"/>
</dbReference>
<dbReference type="SMR" id="Q1GI57"/>
<dbReference type="KEGG" id="sit:TM1040_0926"/>
<dbReference type="eggNOG" id="COG0397">
    <property type="taxonomic scope" value="Bacteria"/>
</dbReference>
<dbReference type="HOGENOM" id="CLU_010245_4_1_5"/>
<dbReference type="OrthoDB" id="9776281at2"/>
<dbReference type="Proteomes" id="UP000000636">
    <property type="component" value="Chromosome"/>
</dbReference>
<dbReference type="GO" id="GO:0070733">
    <property type="term" value="F:AMPylase activity"/>
    <property type="evidence" value="ECO:0007669"/>
    <property type="project" value="RHEA"/>
</dbReference>
<dbReference type="GO" id="GO:0005524">
    <property type="term" value="F:ATP binding"/>
    <property type="evidence" value="ECO:0007669"/>
    <property type="project" value="UniProtKB-UniRule"/>
</dbReference>
<dbReference type="GO" id="GO:0000287">
    <property type="term" value="F:magnesium ion binding"/>
    <property type="evidence" value="ECO:0007669"/>
    <property type="project" value="UniProtKB-UniRule"/>
</dbReference>
<dbReference type="HAMAP" id="MF_00692">
    <property type="entry name" value="YdiU_SelO"/>
    <property type="match status" value="1"/>
</dbReference>
<dbReference type="InterPro" id="IPR003846">
    <property type="entry name" value="SelO"/>
</dbReference>
<dbReference type="NCBIfam" id="NF000658">
    <property type="entry name" value="PRK00029.1"/>
    <property type="match status" value="1"/>
</dbReference>
<dbReference type="PANTHER" id="PTHR32057">
    <property type="entry name" value="PROTEIN ADENYLYLTRANSFERASE SELO, MITOCHONDRIAL"/>
    <property type="match status" value="1"/>
</dbReference>
<dbReference type="PANTHER" id="PTHR32057:SF14">
    <property type="entry name" value="PROTEIN ADENYLYLTRANSFERASE SELO, MITOCHONDRIAL"/>
    <property type="match status" value="1"/>
</dbReference>
<dbReference type="Pfam" id="PF02696">
    <property type="entry name" value="SelO"/>
    <property type="match status" value="1"/>
</dbReference>
<name>SELO_RUEST</name>
<sequence>MTLDIPFDNTYAQLAPEFYTRQAPTPVKAPRLLAFNDALATLLGIARGTDAELAQVFGGNELPEGADPLAQLYAGHQFGTYNPQLGDGRAVLLGEVVGTDGLRRDIQLKGSGPTPYSRRGDGRAWLGPVLREYVVSEAMHALGIPTTRALAAVETGETVWREGGLPGAVLTRVASSHLRVGTFQIFAARGNTEALRSLTEYAIARHYPEAKGALGLLRAVRDAQVELVSAWMSVGFIHGVMNTDNSSIAGETIDYGPCAFMDVYHPNRVFSSIDRTGRYAYGNQPQIAVWNLAQLATALIQLEDDPESVLEEATEIVHAMPELLEDAWLRRFRAKIGLREVAEGDLELVSDLLGIMAQGQADFTNTFRGLLDGTARDQFLEPEAFDVWESRWKDRLSREADPEALMARSNPVLIPRNHRIEQMIAAAVGGDYASFERLMDALSHPFEAREDYADLRRPPAEDEVVQATFCGT</sequence>
<accession>Q1GI57</accession>